<gene>
    <name type="primary">MSMB</name>
</gene>
<accession>P83242</accession>
<keyword id="KW-0027">Amidation</keyword>
<keyword id="KW-0903">Direct protein sequencing</keyword>
<keyword id="KW-1015">Disulfide bond</keyword>
<keyword id="KW-0964">Secreted</keyword>
<comment type="subcellular location">
    <subcellularLocation>
        <location>Secreted</location>
    </subcellularLocation>
</comment>
<comment type="similarity">
    <text evidence="2">Belongs to the beta-microseminoprotein family.</text>
</comment>
<comment type="caution">
    <text evidence="2">The topology of the disulfide bonds differs from that of orthologs.</text>
</comment>
<dbReference type="PIR" id="A59385">
    <property type="entry name" value="A59385"/>
</dbReference>
<dbReference type="SMR" id="P83242"/>
<dbReference type="GO" id="GO:0005576">
    <property type="term" value="C:extracellular region"/>
    <property type="evidence" value="ECO:0000304"/>
    <property type="project" value="UniProtKB"/>
</dbReference>
<dbReference type="Gene3D" id="2.20.25.590">
    <property type="match status" value="1"/>
</dbReference>
<dbReference type="Gene3D" id="2.10.70.10">
    <property type="entry name" value="Complement Module, domain 1"/>
    <property type="match status" value="1"/>
</dbReference>
<dbReference type="InterPro" id="IPR008735">
    <property type="entry name" value="PSP94"/>
</dbReference>
<dbReference type="PANTHER" id="PTHR10500">
    <property type="entry name" value="BETA-MICROSEMINOPROTEIN"/>
    <property type="match status" value="1"/>
</dbReference>
<dbReference type="PANTHER" id="PTHR10500:SF7">
    <property type="entry name" value="BETA-MICROSEMINOPROTEIN"/>
    <property type="match status" value="1"/>
</dbReference>
<dbReference type="Pfam" id="PF05825">
    <property type="entry name" value="PSP94"/>
    <property type="match status" value="1"/>
</dbReference>
<dbReference type="SUPFAM" id="SSF57603">
    <property type="entry name" value="FnI-like domain"/>
    <property type="match status" value="1"/>
</dbReference>
<proteinExistence type="evidence at protein level"/>
<feature type="chain" id="PRO_0000158649" description="Beta-microseminoprotein">
    <location>
        <begin position="1"/>
        <end position="90"/>
    </location>
</feature>
<feature type="modified residue" description="Valine amide" evidence="1">
    <location>
        <position position="90"/>
    </location>
</feature>
<feature type="disulfide bond" evidence="1">
    <location>
        <begin position="2"/>
        <end position="16"/>
    </location>
</feature>
<feature type="disulfide bond" evidence="1">
    <location>
        <begin position="34"/>
        <end position="70"/>
    </location>
</feature>
<feature type="disulfide bond" description="Or C-37 with C-47" evidence="1">
    <location>
        <begin position="37"/>
        <end position="46"/>
    </location>
</feature>
<feature type="disulfide bond" description="Or C-39 with C-46" evidence="1">
    <location>
        <begin position="39"/>
        <end position="47"/>
    </location>
</feature>
<feature type="disulfide bond" evidence="1">
    <location>
        <begin position="61"/>
        <end position="84"/>
    </location>
</feature>
<organism>
    <name type="scientific">Struthio camelus</name>
    <name type="common">Common ostrich</name>
    <dbReference type="NCBI Taxonomy" id="8801"/>
    <lineage>
        <taxon>Eukaryota</taxon>
        <taxon>Metazoa</taxon>
        <taxon>Chordata</taxon>
        <taxon>Craniata</taxon>
        <taxon>Vertebrata</taxon>
        <taxon>Euteleostomi</taxon>
        <taxon>Archelosauria</taxon>
        <taxon>Archosauria</taxon>
        <taxon>Dinosauria</taxon>
        <taxon>Saurischia</taxon>
        <taxon>Theropoda</taxon>
        <taxon>Coelurosauria</taxon>
        <taxon>Aves</taxon>
        <taxon>Palaeognathae</taxon>
        <taxon>Struthioniformes</taxon>
        <taxon>Struthionidae</taxon>
        <taxon>Struthio</taxon>
    </lineage>
</organism>
<name>MSMB_STRCA</name>
<evidence type="ECO:0000269" key="1">
    <source>
    </source>
</evidence>
<evidence type="ECO:0000305" key="2"/>
<sequence>YCFQKINRPGESDEGCILDGKLYPFGEISRTENCYRCSCSRDAMRCCTLFHTPVGYNKEKCKVVFNKESCNYDVVQKDDPSKECFVYSRV</sequence>
<reference key="1">
    <citation type="journal article" date="2001" name="Protein Sci.">
        <title>Characterization of ostrich (Struthio camelus) beta-microseminoprotein (MSP): identification of homologous sequences in EST databases and analysis of their evolution during speciation.</title>
        <authorList>
            <person name="Lazure C."/>
            <person name="Villemure M."/>
            <person name="Gauthier D."/>
            <person name="Naude R.J."/>
            <person name="Mbikay M."/>
        </authorList>
    </citation>
    <scope>PROTEIN SEQUENCE</scope>
    <scope>AMIDATION AT VAL-90</scope>
    <scope>DISULFIDE BONDS</scope>
    <source>
        <tissue>Pituitary</tissue>
    </source>
</reference>
<protein>
    <recommendedName>
        <fullName>Beta-microseminoprotein</fullName>
    </recommendedName>
</protein>